<keyword id="KW-0002">3D-structure</keyword>
<keyword id="KW-0903">Direct protein sequencing</keyword>
<keyword id="KW-0378">Hydrolase</keyword>
<keyword id="KW-0479">Metal-binding</keyword>
<keyword id="KW-0507">mRNA processing</keyword>
<keyword id="KW-0540">Nuclease</keyword>
<keyword id="KW-0547">Nucleotide-binding</keyword>
<keyword id="KW-0539">Nucleus</keyword>
<keyword id="KW-0597">Phosphoprotein</keyword>
<keyword id="KW-1185">Reference proteome</keyword>
<keyword id="KW-0694">RNA-binding</keyword>
<keyword id="KW-0698">rRNA processing</keyword>
<keyword id="KW-0804">Transcription</keyword>
<keyword id="KW-0805">Transcription regulation</keyword>
<keyword id="KW-0806">Transcription termination</keyword>
<name>DXO_YEAST</name>
<protein>
    <recommendedName>
        <fullName evidence="14">Decapping nuclease RAI1</fullName>
        <shortName evidence="13">ScRai1</shortName>
        <ecNumber evidence="10 11">3.6.1.-</ecNumber>
    </recommendedName>
    <alternativeName>
        <fullName evidence="14">NAD-capped RNA hydrolase RAI1</fullName>
        <shortName evidence="14">DeNADding enzyme RAI1</shortName>
        <ecNumber evidence="1">3.6.1.-</ecNumber>
    </alternativeName>
    <alternativeName>
        <fullName evidence="12">RAT1-interacting protein</fullName>
    </alternativeName>
</protein>
<gene>
    <name evidence="12" type="primary">RAI1</name>
    <name type="ordered locus">YGL246C</name>
    <name type="ORF">NRE387</name>
</gene>
<evidence type="ECO:0000250" key="1">
    <source>
        <dbReference type="UniProtKB" id="O13836"/>
    </source>
</evidence>
<evidence type="ECO:0000250" key="2">
    <source>
        <dbReference type="UniProtKB" id="O70348"/>
    </source>
</evidence>
<evidence type="ECO:0000250" key="3">
    <source>
        <dbReference type="UniProtKB" id="Q5AAT0"/>
    </source>
</evidence>
<evidence type="ECO:0000269" key="4">
    <source>
    </source>
</evidence>
<evidence type="ECO:0000269" key="5">
    <source>
    </source>
</evidence>
<evidence type="ECO:0000269" key="6">
    <source>
    </source>
</evidence>
<evidence type="ECO:0000269" key="7">
    <source>
    </source>
</evidence>
<evidence type="ECO:0000269" key="8">
    <source>
    </source>
</evidence>
<evidence type="ECO:0000269" key="9">
    <source>
    </source>
</evidence>
<evidence type="ECO:0000269" key="10">
    <source>
    </source>
</evidence>
<evidence type="ECO:0000269" key="11">
    <source>
    </source>
</evidence>
<evidence type="ECO:0000303" key="12">
    <source>
    </source>
</evidence>
<evidence type="ECO:0000303" key="13">
    <source>
    </source>
</evidence>
<evidence type="ECO:0000305" key="14"/>
<evidence type="ECO:0007744" key="15">
    <source>
    </source>
</evidence>
<evidence type="ECO:0007829" key="16">
    <source>
        <dbReference type="PDB" id="8JCH"/>
    </source>
</evidence>
<evidence type="ECO:0007829" key="17">
    <source>
        <dbReference type="PDB" id="8K5P"/>
    </source>
</evidence>
<sequence>MGVSANLFVKQRGSTTALKQPKEIGFYSRTKDEEYLISDDTNLNYYYLPDAELDRKLDLSSGFQKFKDYYKDFEDRCSLRGLLETIESSERHKGKKINADIITFRGIARKLISCAFDSPSFNTVDLRIVSFNGQLFIKEVPEAVNAAKASSATEAGRNINQDLNVFTGYKFETLATLSNPLQYTPREVIEKRTKRIVSHGDEYISVVRTGVGNCKLILGAEVDCIFDFKENGRDNLKHYAELKCTQQVANISDTHKFERKLFRTWLQCFLVGIPRIIYGFKDDHYVLKTVEEFSTEEVPVLLKNNNPQVGSACLEAIKWYGLLTEWLLKMIPRDEDPHSQIRAFKLVFENNHLRLSEIEESDEEYSGLIDGEHILSNGFKEWRKSLK</sequence>
<comment type="function">
    <text evidence="1 2 4 5 6 8 9 10 11">Decapping enzyme for NAD-capped RNAs: specifically hydrolyzes the nicotinamide adenine dinucleotide (NAD) cap from a subset of RNAs by removing the entire NAD moiety from the 5'-end of an NAD-capped RNA (By similarity). The NAD-cap is present at the 5'-end of some RNAs and snoRNAs. In contrast to the canonical 5'-end N7 methylguanosine (m7G) cap, the NAD cap promotes mRNA decay (By similarity). Also acts as a non-canonical decapping enzyme that removes the entire cap structure of m7G capped or incompletely capped RNAs (PubMed:12897126, PubMed:20802481, PubMed:26101253). Has decapping activity toward incomplete 5'-end m7G cap mRNAs such as unmethylated 5'-end-capped RNA (cap0), while it has no activity toward 2'-O-ribose methylated m7G cap (cap1) (PubMed:12897126, PubMed:20802481). Also possesses RNA 5'-pyrophosphohydrolase activity by hydrolyzing the 5'-end triphosphate to release pyrophosphates (PubMed:20802481). Stimulates exoribonuclease activity of RAT1, allowing it to degrade RNAs with stable secondary structure more effectively (PubMed:20802481). Required for the processing of nuclear mRNA and rRNA precursors (PubMed:10805743, PubMed:12612077, PubMed:16131592). May promote termination of transcription by RNA polymerase II (PubMed:15565157).</text>
</comment>
<comment type="catalytic activity">
    <reaction evidence="1">
        <text>a 5'-end NAD(+)-phospho-ribonucleoside in mRNA + H2O = a 5'-end phospho-ribonucleoside in mRNA + NAD(+) + H(+)</text>
        <dbReference type="Rhea" id="RHEA:60880"/>
        <dbReference type="Rhea" id="RHEA-COMP:15692"/>
        <dbReference type="Rhea" id="RHEA-COMP:15698"/>
        <dbReference type="ChEBI" id="CHEBI:15377"/>
        <dbReference type="ChEBI" id="CHEBI:15378"/>
        <dbReference type="ChEBI" id="CHEBI:57540"/>
        <dbReference type="ChEBI" id="CHEBI:138282"/>
        <dbReference type="ChEBI" id="CHEBI:144029"/>
    </reaction>
    <physiologicalReaction direction="left-to-right" evidence="1">
        <dbReference type="Rhea" id="RHEA:60881"/>
    </physiologicalReaction>
</comment>
<comment type="catalytic activity">
    <reaction evidence="10">
        <text>a 5'-end (N(7)-methyl 5'-triphosphoguanosine)-ribonucleoside-ribonucleotide in mRNA + H2O = a (N(7)-methyl 5'-triphosphoguanosine)-nucleoside + a 5'-end phospho-ribonucleoside in mRNA + H(+)</text>
        <dbReference type="Rhea" id="RHEA:66928"/>
        <dbReference type="Rhea" id="RHEA-COMP:15692"/>
        <dbReference type="Rhea" id="RHEA-COMP:17313"/>
        <dbReference type="ChEBI" id="CHEBI:15377"/>
        <dbReference type="ChEBI" id="CHEBI:15378"/>
        <dbReference type="ChEBI" id="CHEBI:138282"/>
        <dbReference type="ChEBI" id="CHEBI:172876"/>
        <dbReference type="ChEBI" id="CHEBI:172877"/>
    </reaction>
    <physiologicalReaction direction="left-to-right" evidence="10">
        <dbReference type="Rhea" id="RHEA:66929"/>
    </physiologicalReaction>
</comment>
<comment type="catalytic activity">
    <reaction evidence="10">
        <text>a 5'-end triphospho-ribonucleoside in mRNA + H2O = a 5'-end phospho-ribonucleoside in mRNA + diphosphate + H(+)</text>
        <dbReference type="Rhea" id="RHEA:78683"/>
        <dbReference type="Rhea" id="RHEA-COMP:15692"/>
        <dbReference type="Rhea" id="RHEA-COMP:17164"/>
        <dbReference type="ChEBI" id="CHEBI:15377"/>
        <dbReference type="ChEBI" id="CHEBI:15378"/>
        <dbReference type="ChEBI" id="CHEBI:33019"/>
        <dbReference type="ChEBI" id="CHEBI:138282"/>
        <dbReference type="ChEBI" id="CHEBI:167618"/>
    </reaction>
    <physiologicalReaction direction="left-to-right" evidence="10">
        <dbReference type="Rhea" id="RHEA:78684"/>
    </physiologicalReaction>
</comment>
<comment type="cofactor">
    <cofactor evidence="3">
        <name>a divalent metal cation</name>
        <dbReference type="ChEBI" id="CHEBI:60240"/>
    </cofactor>
    <text evidence="3">Divalent metal cation.</text>
</comment>
<comment type="subunit">
    <text evidence="1 4 5 8 10">Interacts with RAT1, RTT103 and pre-60S ribosomal subunits. Interacts with RAT1; the interaction is direct, stabilizes RAT1 protein structure and stimulates its exoribonuclease activity (By similarity). The interaction also stimulates RAI1 pyrophosphohydrolase activity, probably by recruiting it to mRNA substrates (By similarity).</text>
</comment>
<comment type="interaction">
    <interactant intactId="EBI-24206">
        <id>P53063</id>
    </interactant>
    <interactant intactId="EBI-14845">
        <id>Q02792</id>
        <label>RAT1</label>
    </interactant>
    <organismsDiffer>false</organismsDiffer>
    <experiments>5</experiments>
</comment>
<comment type="subcellular location">
    <subcellularLocation>
        <location evidence="5">Nucleus</location>
    </subcellularLocation>
</comment>
<comment type="miscellaneous">
    <text evidence="7">Present with 4030 molecules/cell in log phase SD medium.</text>
</comment>
<comment type="similarity">
    <text evidence="14">Belongs to the DXO/Dom3Z family.</text>
</comment>
<accession>P53063</accession>
<accession>D6VV89</accession>
<feature type="initiator methionine" description="Removed" evidence="4">
    <location>
        <position position="1"/>
    </location>
</feature>
<feature type="chain" id="PRO_0000202708" description="Decapping nuclease RAI1">
    <location>
        <begin position="2"/>
        <end position="387"/>
    </location>
</feature>
<feature type="region of interest" description="Interaction with RAT1">
    <location>
        <begin position="273"/>
        <end position="387"/>
    </location>
</feature>
<feature type="binding site" evidence="1">
    <location>
        <position position="172"/>
    </location>
    <ligand>
        <name>a divalent metal cation</name>
        <dbReference type="ChEBI" id="CHEBI:60240"/>
    </ligand>
</feature>
<feature type="binding site" evidence="2">
    <location>
        <position position="221"/>
    </location>
    <ligand>
        <name>substrate</name>
    </ligand>
</feature>
<feature type="binding site" evidence="1">
    <location>
        <position position="223"/>
    </location>
    <ligand>
        <name>a divalent metal cation</name>
        <dbReference type="ChEBI" id="CHEBI:60240"/>
    </ligand>
</feature>
<feature type="binding site" evidence="1">
    <location>
        <position position="241"/>
    </location>
    <ligand>
        <name>a divalent metal cation</name>
        <dbReference type="ChEBI" id="CHEBI:60240"/>
    </ligand>
</feature>
<feature type="binding site" evidence="1">
    <location>
        <position position="242"/>
    </location>
    <ligand>
        <name>a divalent metal cation</name>
        <dbReference type="ChEBI" id="CHEBI:60240"/>
    </ligand>
</feature>
<feature type="binding site" evidence="2">
    <location>
        <position position="243"/>
    </location>
    <ligand>
        <name>substrate</name>
    </ligand>
</feature>
<feature type="binding site" evidence="2">
    <location>
        <position position="267"/>
    </location>
    <ligand>
        <name>substrate</name>
    </ligand>
</feature>
<feature type="modified residue" description="Phosphoserine" evidence="15">
    <location>
        <position position="198"/>
    </location>
</feature>
<feature type="mutagenesis site" description="Abolishes the decapping activity." evidence="10">
    <original>E</original>
    <variation>A</variation>
    <location>
        <position position="221"/>
    </location>
</feature>
<feature type="mutagenesis site" description="Abolishes the decapping activity." evidence="10">
    <original>D</original>
    <variation>A</variation>
    <location>
        <position position="223"/>
    </location>
</feature>
<feature type="sequence conflict" description="In Ref. 5; AA sequence." evidence="14" ref="5">
    <original>F</original>
    <variation>S</variation>
    <location>
        <position position="8"/>
    </location>
</feature>
<feature type="strand" evidence="16">
    <location>
        <begin position="22"/>
        <end position="29"/>
    </location>
</feature>
<feature type="helix" evidence="17">
    <location>
        <begin position="31"/>
        <end position="33"/>
    </location>
</feature>
<feature type="strand" evidence="17">
    <location>
        <begin position="36"/>
        <end position="38"/>
    </location>
</feature>
<feature type="helix" evidence="16">
    <location>
        <begin position="50"/>
        <end position="54"/>
    </location>
</feature>
<feature type="helix" evidence="16">
    <location>
        <begin position="63"/>
        <end position="65"/>
    </location>
</feature>
<feature type="turn" evidence="16">
    <location>
        <begin position="71"/>
        <end position="73"/>
    </location>
</feature>
<feature type="helix" evidence="16">
    <location>
        <begin position="80"/>
        <end position="93"/>
    </location>
</feature>
<feature type="strand" evidence="16">
    <location>
        <begin position="101"/>
        <end position="104"/>
    </location>
</feature>
<feature type="helix" evidence="16">
    <location>
        <begin position="105"/>
        <end position="113"/>
    </location>
</feature>
<feature type="turn" evidence="16">
    <location>
        <begin position="114"/>
        <end position="116"/>
    </location>
</feature>
<feature type="turn" evidence="16">
    <location>
        <begin position="119"/>
        <end position="121"/>
    </location>
</feature>
<feature type="strand" evidence="16">
    <location>
        <begin position="125"/>
        <end position="129"/>
    </location>
</feature>
<feature type="strand" evidence="16">
    <location>
        <begin position="133"/>
        <end position="136"/>
    </location>
</feature>
<feature type="strand" evidence="16">
    <location>
        <begin position="138"/>
        <end position="140"/>
    </location>
</feature>
<feature type="helix" evidence="16">
    <location>
        <begin position="162"/>
        <end position="174"/>
    </location>
</feature>
<feature type="strand" evidence="16">
    <location>
        <begin position="177"/>
        <end position="179"/>
    </location>
</feature>
<feature type="helix" evidence="16">
    <location>
        <begin position="181"/>
        <end position="183"/>
    </location>
</feature>
<feature type="helix" evidence="16">
    <location>
        <begin position="186"/>
        <end position="193"/>
    </location>
</feature>
<feature type="strand" evidence="16">
    <location>
        <begin position="202"/>
        <end position="211"/>
    </location>
</feature>
<feature type="strand" evidence="16">
    <location>
        <begin position="214"/>
        <end position="222"/>
    </location>
</feature>
<feature type="turn" evidence="16">
    <location>
        <begin position="236"/>
        <end position="238"/>
    </location>
</feature>
<feature type="strand" evidence="16">
    <location>
        <begin position="243"/>
        <end position="246"/>
    </location>
</feature>
<feature type="helix" evidence="16">
    <location>
        <begin position="251"/>
        <end position="271"/>
    </location>
</feature>
<feature type="strand" evidence="16">
    <location>
        <begin position="278"/>
        <end position="281"/>
    </location>
</feature>
<feature type="strand" evidence="17">
    <location>
        <begin position="286"/>
        <end position="294"/>
    </location>
</feature>
<feature type="helix" evidence="16">
    <location>
        <begin position="297"/>
        <end position="305"/>
    </location>
</feature>
<feature type="helix" evidence="16">
    <location>
        <begin position="307"/>
        <end position="330"/>
    </location>
</feature>
<feature type="strand" evidence="17">
    <location>
        <begin position="336"/>
        <end position="338"/>
    </location>
</feature>
<feature type="strand" evidence="16">
    <location>
        <begin position="343"/>
        <end position="349"/>
    </location>
</feature>
<feature type="strand" evidence="16">
    <location>
        <begin position="352"/>
        <end position="358"/>
    </location>
</feature>
<feature type="helix" evidence="16">
    <location>
        <begin position="363"/>
        <end position="368"/>
    </location>
</feature>
<feature type="turn" evidence="16">
    <location>
        <begin position="369"/>
        <end position="372"/>
    </location>
</feature>
<feature type="strand" evidence="16">
    <location>
        <begin position="373"/>
        <end position="375"/>
    </location>
</feature>
<feature type="helix" evidence="16">
    <location>
        <begin position="377"/>
        <end position="386"/>
    </location>
</feature>
<dbReference type="EC" id="3.6.1.-" evidence="10 11 1"/>
<dbReference type="EMBL" id="X94357">
    <property type="protein sequence ID" value="CAA64141.1"/>
    <property type="molecule type" value="Genomic_DNA"/>
</dbReference>
<dbReference type="EMBL" id="Z72768">
    <property type="protein sequence ID" value="CAA96966.1"/>
    <property type="molecule type" value="Genomic_DNA"/>
</dbReference>
<dbReference type="EMBL" id="AY693165">
    <property type="protein sequence ID" value="AAT93184.1"/>
    <property type="molecule type" value="Genomic_DNA"/>
</dbReference>
<dbReference type="EMBL" id="BK006941">
    <property type="protein sequence ID" value="DAA07873.1"/>
    <property type="molecule type" value="Genomic_DNA"/>
</dbReference>
<dbReference type="PIR" id="S61615">
    <property type="entry name" value="S61615"/>
</dbReference>
<dbReference type="RefSeq" id="NP_011268.1">
    <property type="nucleotide sequence ID" value="NM_001181112.1"/>
</dbReference>
<dbReference type="PDB" id="8JCH">
    <property type="method" value="EM"/>
    <property type="resolution" value="2.70 A"/>
    <property type="chains" value="O=1-387"/>
</dbReference>
<dbReference type="PDB" id="8K5P">
    <property type="method" value="EM"/>
    <property type="resolution" value="2.80 A"/>
    <property type="chains" value="O=1-387"/>
</dbReference>
<dbReference type="PDB" id="8Q6V">
    <property type="method" value="EM"/>
    <property type="resolution" value="3.23 A"/>
    <property type="chains" value="A=1-387"/>
</dbReference>
<dbReference type="PDB" id="9FMS">
    <property type="method" value="EM"/>
    <property type="resolution" value="2.65 A"/>
    <property type="chains" value="A=1-387"/>
</dbReference>
<dbReference type="PDBsum" id="8JCH"/>
<dbReference type="PDBsum" id="8K5P"/>
<dbReference type="PDBsum" id="8Q6V"/>
<dbReference type="PDBsum" id="9FMS"/>
<dbReference type="EMDB" id="EMD-18199"/>
<dbReference type="EMDB" id="EMD-36162"/>
<dbReference type="EMDB" id="EMD-36908"/>
<dbReference type="EMDB" id="EMD-50566"/>
<dbReference type="SMR" id="P53063"/>
<dbReference type="BioGRID" id="33033">
    <property type="interactions" value="121"/>
</dbReference>
<dbReference type="ComplexPortal" id="CPX-1332">
    <property type="entry name" value="RAT1-RAI1 RNA polymerase II termination complex"/>
</dbReference>
<dbReference type="DIP" id="DIP-6807N"/>
<dbReference type="FunCoup" id="P53063">
    <property type="interactions" value="735"/>
</dbReference>
<dbReference type="IntAct" id="P53063">
    <property type="interactions" value="42"/>
</dbReference>
<dbReference type="MINT" id="P53063"/>
<dbReference type="STRING" id="4932.YGL246C"/>
<dbReference type="iPTMnet" id="P53063"/>
<dbReference type="PaxDb" id="4932-YGL246C"/>
<dbReference type="PeptideAtlas" id="P53063"/>
<dbReference type="EnsemblFungi" id="YGL246C_mRNA">
    <property type="protein sequence ID" value="YGL246C"/>
    <property type="gene ID" value="YGL246C"/>
</dbReference>
<dbReference type="GeneID" id="852646"/>
<dbReference type="KEGG" id="sce:YGL246C"/>
<dbReference type="AGR" id="SGD:S000003215"/>
<dbReference type="SGD" id="S000003215">
    <property type="gene designation" value="RAI1"/>
</dbReference>
<dbReference type="VEuPathDB" id="FungiDB:YGL246C"/>
<dbReference type="eggNOG" id="KOG1982">
    <property type="taxonomic scope" value="Eukaryota"/>
</dbReference>
<dbReference type="GeneTree" id="ENSGT00390000006425"/>
<dbReference type="HOGENOM" id="CLU_024877_4_1_1"/>
<dbReference type="InParanoid" id="P53063"/>
<dbReference type="OMA" id="VVTWRGH"/>
<dbReference type="OrthoDB" id="5853397at2759"/>
<dbReference type="BioCyc" id="YEAST:G3O-30717-MONOMER"/>
<dbReference type="BioGRID-ORCS" id="852646">
    <property type="hits" value="0 hits in 10 CRISPR screens"/>
</dbReference>
<dbReference type="PRO" id="PR:P53063"/>
<dbReference type="Proteomes" id="UP000002311">
    <property type="component" value="Chromosome VII"/>
</dbReference>
<dbReference type="RNAct" id="P53063">
    <property type="molecule type" value="protein"/>
</dbReference>
<dbReference type="GO" id="GO:0005829">
    <property type="term" value="C:cytosol"/>
    <property type="evidence" value="ECO:0000314"/>
    <property type="project" value="SGD"/>
</dbReference>
<dbReference type="GO" id="GO:0090730">
    <property type="term" value="C:Las1 complex"/>
    <property type="evidence" value="ECO:0000353"/>
    <property type="project" value="ComplexPortal"/>
</dbReference>
<dbReference type="GO" id="GO:0005634">
    <property type="term" value="C:nucleus"/>
    <property type="evidence" value="ECO:0000314"/>
    <property type="project" value="SGD"/>
</dbReference>
<dbReference type="GO" id="GO:0110103">
    <property type="term" value="C:RNA polymerase II termination complex"/>
    <property type="evidence" value="ECO:0000353"/>
    <property type="project" value="ComplexPortal"/>
</dbReference>
<dbReference type="GO" id="GO:0030234">
    <property type="term" value="F:enzyme regulator activity"/>
    <property type="evidence" value="ECO:0000314"/>
    <property type="project" value="SGD"/>
</dbReference>
<dbReference type="GO" id="GO:0046872">
    <property type="term" value="F:metal ion binding"/>
    <property type="evidence" value="ECO:0007669"/>
    <property type="project" value="UniProtKB-KW"/>
</dbReference>
<dbReference type="GO" id="GO:0034353">
    <property type="term" value="F:mRNA 5'-diphosphatase activity"/>
    <property type="evidence" value="ECO:0000314"/>
    <property type="project" value="SGD"/>
</dbReference>
<dbReference type="GO" id="GO:0000166">
    <property type="term" value="F:nucleotide binding"/>
    <property type="evidence" value="ECO:0007669"/>
    <property type="project" value="UniProtKB-KW"/>
</dbReference>
<dbReference type="GO" id="GO:1990174">
    <property type="term" value="F:phosphodiesterase decapping endonuclease activity"/>
    <property type="evidence" value="ECO:0000314"/>
    <property type="project" value="SGD"/>
</dbReference>
<dbReference type="GO" id="GO:0003723">
    <property type="term" value="F:RNA binding"/>
    <property type="evidence" value="ECO:0007669"/>
    <property type="project" value="UniProtKB-KW"/>
</dbReference>
<dbReference type="GO" id="GO:0110152">
    <property type="term" value="F:RNA NAD+-cap (NAD+-forming) hydrolase activity"/>
    <property type="evidence" value="ECO:0007669"/>
    <property type="project" value="RHEA"/>
</dbReference>
<dbReference type="GO" id="GO:0000448">
    <property type="term" value="P:cleavage in ITS2 between 5.8S rRNA and LSU-rRNA of tricistronic rRNA transcript (SSU-rRNA, 5.8S rRNA, LSU-rRNA)"/>
    <property type="evidence" value="ECO:0000314"/>
    <property type="project" value="SGD"/>
</dbReference>
<dbReference type="GO" id="GO:0031087">
    <property type="term" value="P:deadenylation-independent decapping of nuclear-transcribed mRNA"/>
    <property type="evidence" value="ECO:0000314"/>
    <property type="project" value="SGD"/>
</dbReference>
<dbReference type="GO" id="GO:0000466">
    <property type="term" value="P:maturation of 5.8S rRNA from tricistronic rRNA transcript (SSU-rRNA, 5.8S rRNA, LSU-rRNA)"/>
    <property type="evidence" value="ECO:0000315"/>
    <property type="project" value="SGD"/>
</dbReference>
<dbReference type="GO" id="GO:0000463">
    <property type="term" value="P:maturation of LSU-rRNA from tricistronic rRNA transcript (SSU-rRNA, 5.8S rRNA, LSU-rRNA)"/>
    <property type="evidence" value="ECO:0000315"/>
    <property type="project" value="SGD"/>
</dbReference>
<dbReference type="GO" id="GO:0006397">
    <property type="term" value="P:mRNA processing"/>
    <property type="evidence" value="ECO:0007669"/>
    <property type="project" value="UniProtKB-KW"/>
</dbReference>
<dbReference type="GO" id="GO:0110155">
    <property type="term" value="P:NAD-cap decapping"/>
    <property type="evidence" value="ECO:0000315"/>
    <property type="project" value="SGD"/>
</dbReference>
<dbReference type="GO" id="GO:0071035">
    <property type="term" value="P:nuclear polyadenylation-dependent rRNA catabolic process"/>
    <property type="evidence" value="ECO:0000315"/>
    <property type="project" value="SGD"/>
</dbReference>
<dbReference type="GO" id="GO:0000956">
    <property type="term" value="P:nuclear-transcribed mRNA catabolic process"/>
    <property type="evidence" value="ECO:0000315"/>
    <property type="project" value="SGD"/>
</dbReference>
<dbReference type="GO" id="GO:1904595">
    <property type="term" value="P:positive regulation of termination of RNA polymerase II transcription"/>
    <property type="evidence" value="ECO:0000314"/>
    <property type="project" value="ComplexPortal"/>
</dbReference>
<dbReference type="GO" id="GO:0030846">
    <property type="term" value="P:termination of RNA polymerase II transcription, poly(A)-coupled"/>
    <property type="evidence" value="ECO:0000315"/>
    <property type="project" value="SGD"/>
</dbReference>
<dbReference type="InterPro" id="IPR013961">
    <property type="entry name" value="RAI1"/>
</dbReference>
<dbReference type="InterPro" id="IPR039039">
    <property type="entry name" value="RAI1-like_fam"/>
</dbReference>
<dbReference type="PANTHER" id="PTHR12395:SF9">
    <property type="entry name" value="DECAPPING AND EXORIBONUCLEASE PROTEIN"/>
    <property type="match status" value="1"/>
</dbReference>
<dbReference type="PANTHER" id="PTHR12395">
    <property type="entry name" value="DOM-3 RELATED"/>
    <property type="match status" value="1"/>
</dbReference>
<dbReference type="Pfam" id="PF08652">
    <property type="entry name" value="RAI1"/>
    <property type="match status" value="1"/>
</dbReference>
<proteinExistence type="evidence at protein level"/>
<organism>
    <name type="scientific">Saccharomyces cerevisiae (strain ATCC 204508 / S288c)</name>
    <name type="common">Baker's yeast</name>
    <dbReference type="NCBI Taxonomy" id="559292"/>
    <lineage>
        <taxon>Eukaryota</taxon>
        <taxon>Fungi</taxon>
        <taxon>Dikarya</taxon>
        <taxon>Ascomycota</taxon>
        <taxon>Saccharomycotina</taxon>
        <taxon>Saccharomycetes</taxon>
        <taxon>Saccharomycetales</taxon>
        <taxon>Saccharomycetaceae</taxon>
        <taxon>Saccharomyces</taxon>
    </lineage>
</organism>
<reference key="1">
    <citation type="journal article" date="1996" name="Yeast">
        <title>Sequence of a 39,411 bp DNA fragment covering the left end of chromosome VII of Saccharomyces cerevisiae.</title>
        <authorList>
            <person name="Coissac E."/>
            <person name="Maillier E."/>
            <person name="Robineau S."/>
            <person name="Netter P."/>
        </authorList>
    </citation>
    <scope>NUCLEOTIDE SEQUENCE [GENOMIC DNA]</scope>
    <source>
        <strain>ATCC 96604 / S288c / FY1679</strain>
    </source>
</reference>
<reference key="2">
    <citation type="journal article" date="1997" name="Nature">
        <title>The nucleotide sequence of Saccharomyces cerevisiae chromosome VII.</title>
        <authorList>
            <person name="Tettelin H."/>
            <person name="Agostoni-Carbone M.L."/>
            <person name="Albermann K."/>
            <person name="Albers M."/>
            <person name="Arroyo J."/>
            <person name="Backes U."/>
            <person name="Barreiros T."/>
            <person name="Bertani I."/>
            <person name="Bjourson A.J."/>
            <person name="Brueckner M."/>
            <person name="Bruschi C.V."/>
            <person name="Carignani G."/>
            <person name="Castagnoli L."/>
            <person name="Cerdan E."/>
            <person name="Clemente M.L."/>
            <person name="Coblenz A."/>
            <person name="Coglievina M."/>
            <person name="Coissac E."/>
            <person name="Defoor E."/>
            <person name="Del Bino S."/>
            <person name="Delius H."/>
            <person name="Delneri D."/>
            <person name="de Wergifosse P."/>
            <person name="Dujon B."/>
            <person name="Durand P."/>
            <person name="Entian K.-D."/>
            <person name="Eraso P."/>
            <person name="Escribano V."/>
            <person name="Fabiani L."/>
            <person name="Fartmann B."/>
            <person name="Feroli F."/>
            <person name="Feuermann M."/>
            <person name="Frontali L."/>
            <person name="Garcia-Gonzalez M."/>
            <person name="Garcia-Saez M.I."/>
            <person name="Goffeau A."/>
            <person name="Guerreiro P."/>
            <person name="Hani J."/>
            <person name="Hansen M."/>
            <person name="Hebling U."/>
            <person name="Hernandez K."/>
            <person name="Heumann K."/>
            <person name="Hilger F."/>
            <person name="Hofmann B."/>
            <person name="Indge K.J."/>
            <person name="James C.M."/>
            <person name="Klima R."/>
            <person name="Koetter P."/>
            <person name="Kramer B."/>
            <person name="Kramer W."/>
            <person name="Lauquin G."/>
            <person name="Leuther H."/>
            <person name="Louis E.J."/>
            <person name="Maillier E."/>
            <person name="Marconi A."/>
            <person name="Martegani E."/>
            <person name="Mazon M.J."/>
            <person name="Mazzoni C."/>
            <person name="McReynolds A.D.K."/>
            <person name="Melchioretto P."/>
            <person name="Mewes H.-W."/>
            <person name="Minenkova O."/>
            <person name="Mueller-Auer S."/>
            <person name="Nawrocki A."/>
            <person name="Netter P."/>
            <person name="Neu R."/>
            <person name="Nombela C."/>
            <person name="Oliver S.G."/>
            <person name="Panzeri L."/>
            <person name="Paoluzi S."/>
            <person name="Plevani P."/>
            <person name="Portetelle D."/>
            <person name="Portillo F."/>
            <person name="Potier S."/>
            <person name="Purnelle B."/>
            <person name="Rieger M."/>
            <person name="Riles L."/>
            <person name="Rinaldi T."/>
            <person name="Robben J."/>
            <person name="Rodrigues-Pousada C."/>
            <person name="Rodriguez-Belmonte E."/>
            <person name="Rodriguez-Torres A.M."/>
            <person name="Rose M."/>
            <person name="Ruzzi M."/>
            <person name="Saliola M."/>
            <person name="Sanchez-Perez M."/>
            <person name="Schaefer B."/>
            <person name="Schaefer M."/>
            <person name="Scharfe M."/>
            <person name="Schmidheini T."/>
            <person name="Schreer A."/>
            <person name="Skala J."/>
            <person name="Souciet J.-L."/>
            <person name="Steensma H.Y."/>
            <person name="Talla E."/>
            <person name="Thierry A."/>
            <person name="Vandenbol M."/>
            <person name="van der Aart Q.J.M."/>
            <person name="Van Dyck L."/>
            <person name="Vanoni M."/>
            <person name="Verhasselt P."/>
            <person name="Voet M."/>
            <person name="Volckaert G."/>
            <person name="Wambutt R."/>
            <person name="Watson M.D."/>
            <person name="Weber N."/>
            <person name="Wedler E."/>
            <person name="Wedler H."/>
            <person name="Wipfli P."/>
            <person name="Wolf K."/>
            <person name="Wright L.F."/>
            <person name="Zaccaria P."/>
            <person name="Zimmermann M."/>
            <person name="Zollner A."/>
            <person name="Kleine K."/>
        </authorList>
    </citation>
    <scope>NUCLEOTIDE SEQUENCE [LARGE SCALE GENOMIC DNA]</scope>
    <source>
        <strain>ATCC 204508 / S288c</strain>
    </source>
</reference>
<reference key="3">
    <citation type="journal article" date="2014" name="G3 (Bethesda)">
        <title>The reference genome sequence of Saccharomyces cerevisiae: Then and now.</title>
        <authorList>
            <person name="Engel S.R."/>
            <person name="Dietrich F.S."/>
            <person name="Fisk D.G."/>
            <person name="Binkley G."/>
            <person name="Balakrishnan R."/>
            <person name="Costanzo M.C."/>
            <person name="Dwight S.S."/>
            <person name="Hitz B.C."/>
            <person name="Karra K."/>
            <person name="Nash R.S."/>
            <person name="Weng S."/>
            <person name="Wong E.D."/>
            <person name="Lloyd P."/>
            <person name="Skrzypek M.S."/>
            <person name="Miyasato S.R."/>
            <person name="Simison M."/>
            <person name="Cherry J.M."/>
        </authorList>
    </citation>
    <scope>GENOME REANNOTATION</scope>
    <source>
        <strain>ATCC 204508 / S288c</strain>
    </source>
</reference>
<reference key="4">
    <citation type="journal article" date="2007" name="Genome Res.">
        <title>Approaching a complete repository of sequence-verified protein-encoding clones for Saccharomyces cerevisiae.</title>
        <authorList>
            <person name="Hu Y."/>
            <person name="Rolfs A."/>
            <person name="Bhullar B."/>
            <person name="Murthy T.V.S."/>
            <person name="Zhu C."/>
            <person name="Berger M.F."/>
            <person name="Camargo A.A."/>
            <person name="Kelley F."/>
            <person name="McCarron S."/>
            <person name="Jepson D."/>
            <person name="Richardson A."/>
            <person name="Raphael J."/>
            <person name="Moreira D."/>
            <person name="Taycher E."/>
            <person name="Zuo D."/>
            <person name="Mohr S."/>
            <person name="Kane M.F."/>
            <person name="Williamson J."/>
            <person name="Simpson A.J.G."/>
            <person name="Bulyk M.L."/>
            <person name="Harlow E."/>
            <person name="Marsischky G."/>
            <person name="Kolodner R.D."/>
            <person name="LaBaer J."/>
        </authorList>
    </citation>
    <scope>NUCLEOTIDE SEQUENCE [GENOMIC DNA]</scope>
    <source>
        <strain>ATCC 204508 / S288c</strain>
    </source>
</reference>
<reference key="5">
    <citation type="journal article" date="2000" name="Mol. Cell. Biol.">
        <title>Saccharomyces cerevisiae RAI1 (YGL246c) is homologous to human DOM3Z and encodes a protein that binds the nuclear exoribonuclease Rat1p.</title>
        <authorList>
            <person name="Xue Y."/>
            <person name="Bai X."/>
            <person name="Lee I."/>
            <person name="Kallstrom G."/>
            <person name="Ho J."/>
            <person name="Brown J."/>
            <person name="Stevens A."/>
            <person name="Johnson A.W."/>
        </authorList>
    </citation>
    <scope>PROTEIN SEQUENCE OF 2-17</scope>
    <scope>FUNCTION</scope>
    <scope>INTERACTION WITH RAT1</scope>
</reference>
<reference key="6">
    <citation type="journal article" date="2003" name="Mol. Cell. Biol.">
        <title>Intersection of the Kap123p-mediated nuclear import and ribosome export pathways.</title>
        <authorList>
            <person name="Sydorskyy Y."/>
            <person name="Dilworth D.J."/>
            <person name="Yi E.C."/>
            <person name="Goodlett D.R."/>
            <person name="Wozniak R.W."/>
            <person name="Aitchison J.D."/>
        </authorList>
    </citation>
    <scope>FUNCTION</scope>
    <scope>INTERACTION WITH RAT1 AND PRE-60S RIBOSOMAL SUBUNITS</scope>
    <scope>SUBCELLULAR LOCATION</scope>
</reference>
<reference key="7">
    <citation type="journal article" date="2003" name="Mol. Cell. Biol.">
        <title>Degradation of normal mRNA in the nucleus of Saccharomyces cerevisiae.</title>
        <authorList>
            <person name="Das B."/>
            <person name="Butler J.S."/>
            <person name="Sherman F."/>
        </authorList>
    </citation>
    <scope>FUNCTION</scope>
</reference>
<reference key="8">
    <citation type="journal article" date="2003" name="Nature">
        <title>Global analysis of protein expression in yeast.</title>
        <authorList>
            <person name="Ghaemmaghami S."/>
            <person name="Huh W.-K."/>
            <person name="Bower K."/>
            <person name="Howson R.W."/>
            <person name="Belle A."/>
            <person name="Dephoure N."/>
            <person name="O'Shea E.K."/>
            <person name="Weissman J.S."/>
        </authorList>
    </citation>
    <scope>LEVEL OF PROTEIN EXPRESSION [LARGE SCALE ANALYSIS]</scope>
</reference>
<reference key="9">
    <citation type="journal article" date="2004" name="Nature">
        <title>The yeast Rat1 exonuclease promotes transcription termination by RNA polymerase II.</title>
        <authorList>
            <person name="Kim M."/>
            <person name="Krogan N.J."/>
            <person name="Vasiljeva L."/>
            <person name="Rando O.J."/>
            <person name="Nedea E."/>
            <person name="Greenblatt J.F."/>
            <person name="Buratowski S."/>
        </authorList>
    </citation>
    <scope>FUNCTION</scope>
    <scope>IDENTIFICATION BY MASS SPECTROMETRY</scope>
    <scope>IDENTIFICATION IN A COMPLEX WITH RTT103</scope>
</reference>
<reference key="10">
    <citation type="journal article" date="2005" name="Nature">
        <authorList>
            <person name="Kim M."/>
            <person name="Krogan N.J."/>
            <person name="Vasiljeva L."/>
            <person name="Rando O.J."/>
            <person name="Nedea E."/>
            <person name="Greenblatt J.F."/>
            <person name="Buratowski S."/>
        </authorList>
    </citation>
    <scope>ERRATUM OF PUBMED:15565157</scope>
</reference>
<reference key="11">
    <citation type="journal article" date="2005" name="RNA">
        <title>Rat1p and Rai1p function with the nuclear exosome in the processing and degradation of rRNA precursors.</title>
        <authorList>
            <person name="Fang F."/>
            <person name="Phillips S."/>
            <person name="Butler J.S."/>
        </authorList>
    </citation>
    <scope>FUNCTION</scope>
</reference>
<reference key="12">
    <citation type="journal article" date="2008" name="Mol. Cell. Proteomics">
        <title>A multidimensional chromatography technology for in-depth phosphoproteome analysis.</title>
        <authorList>
            <person name="Albuquerque C.P."/>
            <person name="Smolka M.B."/>
            <person name="Payne S.H."/>
            <person name="Bafna V."/>
            <person name="Eng J."/>
            <person name="Zhou H."/>
        </authorList>
    </citation>
    <scope>PHOSPHORYLATION [LARGE SCALE ANALYSIS] AT SER-198</scope>
    <scope>IDENTIFICATION BY MASS SPECTROMETRY [LARGE SCALE ANALYSIS]</scope>
</reference>
<reference key="13">
    <citation type="journal article" date="2010" name="Nature">
        <title>Identification of a quality-control mechanism for mRNA 5'-end capping.</title>
        <authorList>
            <person name="Jiao X."/>
            <person name="Xiang S."/>
            <person name="Oh C."/>
            <person name="Martin C.E."/>
            <person name="Tong L."/>
            <person name="Kiledjian M."/>
        </authorList>
    </citation>
    <scope>FUNCTION</scope>
    <scope>CATALYTIC ACTIVITY</scope>
    <scope>INTERACTION WITH RAT1</scope>
    <scope>MUTAGENESIS OF GLU-221 AND ASP-223</scope>
</reference>
<reference key="14">
    <citation type="journal article" date="2012" name="Proc. Natl. Acad. Sci. U.S.A.">
        <title>N-terminal acetylome analyses and functional insights of the N-terminal acetyltransferase NatB.</title>
        <authorList>
            <person name="Van Damme P."/>
            <person name="Lasa M."/>
            <person name="Polevoda B."/>
            <person name="Gazquez C."/>
            <person name="Elosegui-Artola A."/>
            <person name="Kim D.S."/>
            <person name="De Juan-Pardo E."/>
            <person name="Demeyer K."/>
            <person name="Hole K."/>
            <person name="Larrea E."/>
            <person name="Timmerman E."/>
            <person name="Prieto J."/>
            <person name="Arnesen T."/>
            <person name="Sherman F."/>
            <person name="Gevaert K."/>
            <person name="Aldabe R."/>
        </authorList>
    </citation>
    <scope>IDENTIFICATION BY MASS SPECTROMETRY [LARGE SCALE ANALYSIS]</scope>
</reference>
<reference key="15">
    <citation type="journal article" date="2015" name="Nucleic Acids Res.">
        <title>Structural and biochemical studies of the distinct activity profiles of Rai1 enzymes.</title>
        <authorList>
            <person name="Wang V.Y."/>
            <person name="Jiao X."/>
            <person name="Kiledjian M."/>
            <person name="Tong L."/>
        </authorList>
    </citation>
    <scope>FUNCTION</scope>
</reference>